<accession>A8G0W4</accession>
<name>HEM3_SHESH</name>
<reference key="1">
    <citation type="submission" date="2007-08" db="EMBL/GenBank/DDBJ databases">
        <title>Complete sequence of Shewanella sediminis HAW-EB3.</title>
        <authorList>
            <consortium name="US DOE Joint Genome Institute"/>
            <person name="Copeland A."/>
            <person name="Lucas S."/>
            <person name="Lapidus A."/>
            <person name="Barry K."/>
            <person name="Glavina del Rio T."/>
            <person name="Dalin E."/>
            <person name="Tice H."/>
            <person name="Pitluck S."/>
            <person name="Chertkov O."/>
            <person name="Brettin T."/>
            <person name="Bruce D."/>
            <person name="Detter J.C."/>
            <person name="Han C."/>
            <person name="Schmutz J."/>
            <person name="Larimer F."/>
            <person name="Land M."/>
            <person name="Hauser L."/>
            <person name="Kyrpides N."/>
            <person name="Kim E."/>
            <person name="Zhao J.-S."/>
            <person name="Richardson P."/>
        </authorList>
    </citation>
    <scope>NUCLEOTIDE SEQUENCE [LARGE SCALE GENOMIC DNA]</scope>
    <source>
        <strain>HAW-EB3</strain>
    </source>
</reference>
<dbReference type="EC" id="2.5.1.61" evidence="1"/>
<dbReference type="EMBL" id="CP000821">
    <property type="protein sequence ID" value="ABV38737.1"/>
    <property type="molecule type" value="Genomic_DNA"/>
</dbReference>
<dbReference type="RefSeq" id="WP_012144466.1">
    <property type="nucleotide sequence ID" value="NC_009831.1"/>
</dbReference>
<dbReference type="SMR" id="A8G0W4"/>
<dbReference type="STRING" id="425104.Ssed_4133"/>
<dbReference type="KEGG" id="sse:Ssed_4133"/>
<dbReference type="eggNOG" id="COG0181">
    <property type="taxonomic scope" value="Bacteria"/>
</dbReference>
<dbReference type="HOGENOM" id="CLU_019704_0_2_6"/>
<dbReference type="OrthoDB" id="9810298at2"/>
<dbReference type="UniPathway" id="UPA00251">
    <property type="reaction ID" value="UER00319"/>
</dbReference>
<dbReference type="Proteomes" id="UP000002015">
    <property type="component" value="Chromosome"/>
</dbReference>
<dbReference type="GO" id="GO:0005737">
    <property type="term" value="C:cytoplasm"/>
    <property type="evidence" value="ECO:0007669"/>
    <property type="project" value="TreeGrafter"/>
</dbReference>
<dbReference type="GO" id="GO:0004418">
    <property type="term" value="F:hydroxymethylbilane synthase activity"/>
    <property type="evidence" value="ECO:0007669"/>
    <property type="project" value="UniProtKB-UniRule"/>
</dbReference>
<dbReference type="GO" id="GO:0006782">
    <property type="term" value="P:protoporphyrinogen IX biosynthetic process"/>
    <property type="evidence" value="ECO:0007669"/>
    <property type="project" value="UniProtKB-UniRule"/>
</dbReference>
<dbReference type="CDD" id="cd13646">
    <property type="entry name" value="PBP2_EcHMBS_like"/>
    <property type="match status" value="1"/>
</dbReference>
<dbReference type="FunFam" id="3.30.160.40:FF:000002">
    <property type="entry name" value="Porphobilinogen deaminase"/>
    <property type="match status" value="1"/>
</dbReference>
<dbReference type="FunFam" id="3.40.190.10:FF:000004">
    <property type="entry name" value="Porphobilinogen deaminase"/>
    <property type="match status" value="1"/>
</dbReference>
<dbReference type="FunFam" id="3.40.190.10:FF:000005">
    <property type="entry name" value="Porphobilinogen deaminase"/>
    <property type="match status" value="1"/>
</dbReference>
<dbReference type="Gene3D" id="3.40.190.10">
    <property type="entry name" value="Periplasmic binding protein-like II"/>
    <property type="match status" value="2"/>
</dbReference>
<dbReference type="Gene3D" id="3.30.160.40">
    <property type="entry name" value="Porphobilinogen deaminase, C-terminal domain"/>
    <property type="match status" value="1"/>
</dbReference>
<dbReference type="HAMAP" id="MF_00260">
    <property type="entry name" value="Porphobil_deam"/>
    <property type="match status" value="1"/>
</dbReference>
<dbReference type="InterPro" id="IPR000860">
    <property type="entry name" value="HemC"/>
</dbReference>
<dbReference type="InterPro" id="IPR022419">
    <property type="entry name" value="Porphobilin_deaminase_cofac_BS"/>
</dbReference>
<dbReference type="InterPro" id="IPR022417">
    <property type="entry name" value="Porphobilin_deaminase_N"/>
</dbReference>
<dbReference type="InterPro" id="IPR022418">
    <property type="entry name" value="Porphobilinogen_deaminase_C"/>
</dbReference>
<dbReference type="InterPro" id="IPR036803">
    <property type="entry name" value="Porphobilinogen_deaminase_C_sf"/>
</dbReference>
<dbReference type="NCBIfam" id="TIGR00212">
    <property type="entry name" value="hemC"/>
    <property type="match status" value="1"/>
</dbReference>
<dbReference type="PANTHER" id="PTHR11557">
    <property type="entry name" value="PORPHOBILINOGEN DEAMINASE"/>
    <property type="match status" value="1"/>
</dbReference>
<dbReference type="PANTHER" id="PTHR11557:SF0">
    <property type="entry name" value="PORPHOBILINOGEN DEAMINASE"/>
    <property type="match status" value="1"/>
</dbReference>
<dbReference type="Pfam" id="PF01379">
    <property type="entry name" value="Porphobil_deam"/>
    <property type="match status" value="1"/>
</dbReference>
<dbReference type="Pfam" id="PF03900">
    <property type="entry name" value="Porphobil_deamC"/>
    <property type="match status" value="1"/>
</dbReference>
<dbReference type="PIRSF" id="PIRSF001438">
    <property type="entry name" value="4pyrrol_synth_OHMeBilane_synth"/>
    <property type="match status" value="1"/>
</dbReference>
<dbReference type="PRINTS" id="PR00151">
    <property type="entry name" value="PORPHBDMNASE"/>
</dbReference>
<dbReference type="SUPFAM" id="SSF53850">
    <property type="entry name" value="Periplasmic binding protein-like II"/>
    <property type="match status" value="1"/>
</dbReference>
<dbReference type="SUPFAM" id="SSF54782">
    <property type="entry name" value="Porphobilinogen deaminase (hydroxymethylbilane synthase), C-terminal domain"/>
    <property type="match status" value="1"/>
</dbReference>
<dbReference type="PROSITE" id="PS00533">
    <property type="entry name" value="PORPHOBILINOGEN_DEAM"/>
    <property type="match status" value="1"/>
</dbReference>
<proteinExistence type="inferred from homology"/>
<gene>
    <name evidence="1" type="primary">hemC</name>
    <name type="ordered locus">Ssed_4133</name>
</gene>
<evidence type="ECO:0000255" key="1">
    <source>
        <dbReference type="HAMAP-Rule" id="MF_00260"/>
    </source>
</evidence>
<comment type="function">
    <text evidence="1">Tetrapolymerization of the monopyrrole PBG into the hydroxymethylbilane pre-uroporphyrinogen in several discrete steps.</text>
</comment>
<comment type="catalytic activity">
    <reaction evidence="1">
        <text>4 porphobilinogen + H2O = hydroxymethylbilane + 4 NH4(+)</text>
        <dbReference type="Rhea" id="RHEA:13185"/>
        <dbReference type="ChEBI" id="CHEBI:15377"/>
        <dbReference type="ChEBI" id="CHEBI:28938"/>
        <dbReference type="ChEBI" id="CHEBI:57845"/>
        <dbReference type="ChEBI" id="CHEBI:58126"/>
        <dbReference type="EC" id="2.5.1.61"/>
    </reaction>
</comment>
<comment type="cofactor">
    <cofactor evidence="1">
        <name>dipyrromethane</name>
        <dbReference type="ChEBI" id="CHEBI:60342"/>
    </cofactor>
    <text evidence="1">Binds 1 dipyrromethane group covalently.</text>
</comment>
<comment type="pathway">
    <text evidence="1">Porphyrin-containing compound metabolism; protoporphyrin-IX biosynthesis; coproporphyrinogen-III from 5-aminolevulinate: step 2/4.</text>
</comment>
<comment type="subunit">
    <text evidence="1">Monomer.</text>
</comment>
<comment type="miscellaneous">
    <text evidence="1">The porphobilinogen subunits are added to the dipyrromethane group.</text>
</comment>
<comment type="similarity">
    <text evidence="1">Belongs to the HMBS family.</text>
</comment>
<organism>
    <name type="scientific">Shewanella sediminis (strain HAW-EB3)</name>
    <dbReference type="NCBI Taxonomy" id="425104"/>
    <lineage>
        <taxon>Bacteria</taxon>
        <taxon>Pseudomonadati</taxon>
        <taxon>Pseudomonadota</taxon>
        <taxon>Gammaproteobacteria</taxon>
        <taxon>Alteromonadales</taxon>
        <taxon>Shewanellaceae</taxon>
        <taxon>Shewanella</taxon>
    </lineage>
</organism>
<keyword id="KW-0627">Porphyrin biosynthesis</keyword>
<keyword id="KW-1185">Reference proteome</keyword>
<keyword id="KW-0808">Transferase</keyword>
<sequence>MSQNVIRIATRKSPLALWQAEFVKAELEKFHEGLTVELLPMSTKGDIILDTPLAKVGGKGLFVKELEVAMLEDRADIAVHSMKDVPVDFPEGLGLEVICEREDPRDAFVSNNYKNISELPQGAVVGTSSLRRQCQIRASRPDLVIRDLRGNVGTRLGKLDAGNYDAIILAAAGLKRLKLEERITSFISAEESLPANGQGAVGIECRINDERVKALLAPLEHTETRHRVIAERAMNTHLEGGCQVPIGAYAEIQDDTLTLRGLVGNPDGSHIIEATKVGSKTDAQAIGVALAEELLSKGAKAILDAVYIK</sequence>
<feature type="chain" id="PRO_1000078624" description="Porphobilinogen deaminase">
    <location>
        <begin position="1"/>
        <end position="309"/>
    </location>
</feature>
<feature type="modified residue" description="S-(dipyrrolylmethanemethyl)cysteine" evidence="1">
    <location>
        <position position="242"/>
    </location>
</feature>
<protein>
    <recommendedName>
        <fullName evidence="1">Porphobilinogen deaminase</fullName>
        <shortName evidence="1">PBG</shortName>
        <ecNumber evidence="1">2.5.1.61</ecNumber>
    </recommendedName>
    <alternativeName>
        <fullName evidence="1">Hydroxymethylbilane synthase</fullName>
        <shortName evidence="1">HMBS</shortName>
    </alternativeName>
    <alternativeName>
        <fullName evidence="1">Pre-uroporphyrinogen synthase</fullName>
    </alternativeName>
</protein>